<feature type="chain" id="PRO_0000062755" description="Cell shape-determining protein Mbl">
    <location>
        <begin position="1"/>
        <end position="333"/>
    </location>
</feature>
<feature type="binding site" evidence="2">
    <location>
        <begin position="12"/>
        <end position="14"/>
    </location>
    <ligand>
        <name>ATP</name>
        <dbReference type="ChEBI" id="CHEBI:30616"/>
    </ligand>
</feature>
<feature type="binding site" evidence="2">
    <location>
        <begin position="156"/>
        <end position="158"/>
    </location>
    <ligand>
        <name>ATP</name>
        <dbReference type="ChEBI" id="CHEBI:30616"/>
    </ligand>
</feature>
<feature type="binding site" evidence="2">
    <location>
        <begin position="204"/>
        <end position="207"/>
    </location>
    <ligand>
        <name>ATP</name>
        <dbReference type="ChEBI" id="CHEBI:30616"/>
    </ligand>
</feature>
<feature type="binding site" evidence="2">
    <location>
        <begin position="284"/>
        <end position="287"/>
    </location>
    <ligand>
        <name>ATP</name>
        <dbReference type="ChEBI" id="CHEBI:30616"/>
    </ligand>
</feature>
<proteinExistence type="evidence at protein level"/>
<accession>P39751</accession>
<accession>O32275</accession>
<reference key="1">
    <citation type="journal article" date="1995" name="J. Bacteriol.">
        <title>Bacillus subtilis possesses a second determinant with extensive sequence similarity to the Escherichia coli mreB morphogene.</title>
        <authorList>
            <person name="Abhayawardhane Y."/>
            <person name="Stewart G.C."/>
        </authorList>
    </citation>
    <scope>NUCLEOTIDE SEQUENCE [GENOMIC DNA]</scope>
    <source>
        <strain>168</strain>
    </source>
</reference>
<reference key="2">
    <citation type="journal article" date="1997" name="Nature">
        <title>The complete genome sequence of the Gram-positive bacterium Bacillus subtilis.</title>
        <authorList>
            <person name="Kunst F."/>
            <person name="Ogasawara N."/>
            <person name="Moszer I."/>
            <person name="Albertini A.M."/>
            <person name="Alloni G."/>
            <person name="Azevedo V."/>
            <person name="Bertero M.G."/>
            <person name="Bessieres P."/>
            <person name="Bolotin A."/>
            <person name="Borchert S."/>
            <person name="Borriss R."/>
            <person name="Boursier L."/>
            <person name="Brans A."/>
            <person name="Braun M."/>
            <person name="Brignell S.C."/>
            <person name="Bron S."/>
            <person name="Brouillet S."/>
            <person name="Bruschi C.V."/>
            <person name="Caldwell B."/>
            <person name="Capuano V."/>
            <person name="Carter N.M."/>
            <person name="Choi S.-K."/>
            <person name="Codani J.-J."/>
            <person name="Connerton I.F."/>
            <person name="Cummings N.J."/>
            <person name="Daniel R.A."/>
            <person name="Denizot F."/>
            <person name="Devine K.M."/>
            <person name="Duesterhoeft A."/>
            <person name="Ehrlich S.D."/>
            <person name="Emmerson P.T."/>
            <person name="Entian K.-D."/>
            <person name="Errington J."/>
            <person name="Fabret C."/>
            <person name="Ferrari E."/>
            <person name="Foulger D."/>
            <person name="Fritz C."/>
            <person name="Fujita M."/>
            <person name="Fujita Y."/>
            <person name="Fuma S."/>
            <person name="Galizzi A."/>
            <person name="Galleron N."/>
            <person name="Ghim S.-Y."/>
            <person name="Glaser P."/>
            <person name="Goffeau A."/>
            <person name="Golightly E.J."/>
            <person name="Grandi G."/>
            <person name="Guiseppi G."/>
            <person name="Guy B.J."/>
            <person name="Haga K."/>
            <person name="Haiech J."/>
            <person name="Harwood C.R."/>
            <person name="Henaut A."/>
            <person name="Hilbert H."/>
            <person name="Holsappel S."/>
            <person name="Hosono S."/>
            <person name="Hullo M.-F."/>
            <person name="Itaya M."/>
            <person name="Jones L.-M."/>
            <person name="Joris B."/>
            <person name="Karamata D."/>
            <person name="Kasahara Y."/>
            <person name="Klaerr-Blanchard M."/>
            <person name="Klein C."/>
            <person name="Kobayashi Y."/>
            <person name="Koetter P."/>
            <person name="Koningstein G."/>
            <person name="Krogh S."/>
            <person name="Kumano M."/>
            <person name="Kurita K."/>
            <person name="Lapidus A."/>
            <person name="Lardinois S."/>
            <person name="Lauber J."/>
            <person name="Lazarevic V."/>
            <person name="Lee S.-M."/>
            <person name="Levine A."/>
            <person name="Liu H."/>
            <person name="Masuda S."/>
            <person name="Mauel C."/>
            <person name="Medigue C."/>
            <person name="Medina N."/>
            <person name="Mellado R.P."/>
            <person name="Mizuno M."/>
            <person name="Moestl D."/>
            <person name="Nakai S."/>
            <person name="Noback M."/>
            <person name="Noone D."/>
            <person name="O'Reilly M."/>
            <person name="Ogawa K."/>
            <person name="Ogiwara A."/>
            <person name="Oudega B."/>
            <person name="Park S.-H."/>
            <person name="Parro V."/>
            <person name="Pohl T.M."/>
            <person name="Portetelle D."/>
            <person name="Porwollik S."/>
            <person name="Prescott A.M."/>
            <person name="Presecan E."/>
            <person name="Pujic P."/>
            <person name="Purnelle B."/>
            <person name="Rapoport G."/>
            <person name="Rey M."/>
            <person name="Reynolds S."/>
            <person name="Rieger M."/>
            <person name="Rivolta C."/>
            <person name="Rocha E."/>
            <person name="Roche B."/>
            <person name="Rose M."/>
            <person name="Sadaie Y."/>
            <person name="Sato T."/>
            <person name="Scanlan E."/>
            <person name="Schleich S."/>
            <person name="Schroeter R."/>
            <person name="Scoffone F."/>
            <person name="Sekiguchi J."/>
            <person name="Sekowska A."/>
            <person name="Seror S.J."/>
            <person name="Serror P."/>
            <person name="Shin B.-S."/>
            <person name="Soldo B."/>
            <person name="Sorokin A."/>
            <person name="Tacconi E."/>
            <person name="Takagi T."/>
            <person name="Takahashi H."/>
            <person name="Takemaru K."/>
            <person name="Takeuchi M."/>
            <person name="Tamakoshi A."/>
            <person name="Tanaka T."/>
            <person name="Terpstra P."/>
            <person name="Tognoni A."/>
            <person name="Tosato V."/>
            <person name="Uchiyama S."/>
            <person name="Vandenbol M."/>
            <person name="Vannier F."/>
            <person name="Vassarotti A."/>
            <person name="Viari A."/>
            <person name="Wambutt R."/>
            <person name="Wedler E."/>
            <person name="Wedler H."/>
            <person name="Weitzenegger T."/>
            <person name="Winters P."/>
            <person name="Wipat A."/>
            <person name="Yamamoto H."/>
            <person name="Yamane K."/>
            <person name="Yasumoto K."/>
            <person name="Yata K."/>
            <person name="Yoshida K."/>
            <person name="Yoshikawa H.-F."/>
            <person name="Zumstein E."/>
            <person name="Yoshikawa H."/>
            <person name="Danchin A."/>
        </authorList>
    </citation>
    <scope>NUCLEOTIDE SEQUENCE [LARGE SCALE GENOMIC DNA]</scope>
    <source>
        <strain>168</strain>
    </source>
</reference>
<reference key="3">
    <citation type="journal article" date="1999" name="Genome Res.">
        <title>Detecting and analyzing DNA sequencing errors: toward a higher quality of the Bacillus subtilis genome sequence.</title>
        <authorList>
            <person name="Medigue C."/>
            <person name="Rose M."/>
            <person name="Viari A."/>
            <person name="Danchin A."/>
        </authorList>
    </citation>
    <scope>SEQUENCE REVISION</scope>
</reference>
<reference key="4">
    <citation type="journal article" date="1997" name="Microbiology">
        <title>The Bacillus subtilis genome from gerBC (311 degrees) to licR (334 degrees).</title>
        <authorList>
            <person name="Presecan E."/>
            <person name="Moszer I."/>
            <person name="Boursier L."/>
            <person name="Cruz Ramos H."/>
            <person name="De La Fuente V."/>
            <person name="Hullo M.-F."/>
            <person name="Lelong C."/>
            <person name="Schleich S."/>
            <person name="Sekowska A."/>
            <person name="Song B.H."/>
            <person name="Villani G."/>
            <person name="Kunst F."/>
            <person name="Danchin A."/>
            <person name="Glaser P."/>
        </authorList>
    </citation>
    <scope>NUCLEOTIDE SEQUENCE [GENOMIC DNA] OF 1-301</scope>
    <source>
        <strain>168</strain>
    </source>
</reference>
<reference key="5">
    <citation type="journal article" date="2001" name="Cell">
        <title>Control of cell shape in bacteria: helical, actin-like filaments in Bacillus subtilis.</title>
        <authorList>
            <person name="Jones L.J."/>
            <person name="Carballido-Lopez R."/>
            <person name="Errington J."/>
        </authorList>
    </citation>
    <scope>FUNCTION</scope>
    <scope>SUBUNIT</scope>
    <scope>SUBCELLULAR LOCATION</scope>
    <scope>DISRUPTION PHENOTYPE</scope>
</reference>
<reference key="6">
    <citation type="journal article" date="2003" name="Curr. Biol.">
        <title>Actin-like proteins MreB and Mbl from Bacillus subtilis are required for bipolar positioning of replication origins.</title>
        <authorList>
            <person name="Soufo H.J."/>
            <person name="Graumann P.L."/>
        </authorList>
    </citation>
    <scope>FUNCTION</scope>
    <scope>DISRUPTION PHENOTYPE</scope>
</reference>
<reference key="7">
    <citation type="journal article" date="2006" name="Dev. Cell">
        <title>Actin homolog MreBH governs cell morphogenesis by localization of the cell wall hydrolase LytE.</title>
        <authorList>
            <person name="Carballido-Lopez R."/>
            <person name="Formstone A."/>
            <person name="Li Y."/>
            <person name="Ehrlich S.D."/>
            <person name="Noirot P."/>
            <person name="Errington J."/>
        </authorList>
    </citation>
    <scope>SUBCELLULAR LOCATION</scope>
</reference>
<reference key="8">
    <citation type="journal article" date="2006" name="Mol. Microbiol.">
        <title>Dynamic localization and interaction with other Bacillus subtilis actin-like proteins are important for the function of MreB.</title>
        <authorList>
            <person name="Defeu Soufo H.J."/>
            <person name="Graumann P.L."/>
        </authorList>
    </citation>
    <scope>INTERACTION WITH MREB; MREBH AND MREC</scope>
    <scope>SUBCELLULAR LOCATION</scope>
</reference>
<reference key="9">
    <citation type="journal article" date="2009" name="Mol. Microbiol.">
        <title>Partial functional redundancy of MreB isoforms, MreB, Mbl and MreBH, in cell morphogenesis of Bacillus subtilis.</title>
        <authorList>
            <person name="Kawai Y."/>
            <person name="Asai K."/>
            <person name="Errington J."/>
        </authorList>
    </citation>
    <scope>FUNCTION</scope>
    <scope>SUBUNIT</scope>
</reference>
<reference key="10">
    <citation type="journal article" date="2011" name="Science">
        <title>Coupled, circumferential motions of the cell wall synthesis machinery and MreB filaments in B. subtilis.</title>
        <authorList>
            <person name="Garner E.C."/>
            <person name="Bernard R."/>
            <person name="Wang W."/>
            <person name="Zhuang X."/>
            <person name="Rudner D.Z."/>
            <person name="Mitchison T."/>
        </authorList>
    </citation>
    <scope>FUNCTION</scope>
</reference>
<reference key="11">
    <citation type="journal article" date="2011" name="Science">
        <title>Processive movement of MreB-associated cell wall biosynthetic complexes in bacteria.</title>
        <authorList>
            <person name="Dominguez-Escobar J."/>
            <person name="Chastanet A."/>
            <person name="Crevenna A.H."/>
            <person name="Fromion V."/>
            <person name="Wedlich-Soeldner R."/>
            <person name="Carballido-Lopez R."/>
        </authorList>
    </citation>
    <scope>FUNCTION</scope>
</reference>
<name>MBL_BACSU</name>
<keyword id="KW-0067">ATP-binding</keyword>
<keyword id="KW-0133">Cell shape</keyword>
<keyword id="KW-0963">Cytoplasm</keyword>
<keyword id="KW-0547">Nucleotide-binding</keyword>
<keyword id="KW-1185">Reference proteome</keyword>
<gene>
    <name type="primary">mbl</name>
    <name type="ordered locus">BSU36410</name>
</gene>
<dbReference type="EMBL" id="U12962">
    <property type="protein sequence ID" value="AAA67878.1"/>
    <property type="molecule type" value="Genomic_DNA"/>
</dbReference>
<dbReference type="EMBL" id="AL009126">
    <property type="protein sequence ID" value="CAB15658.2"/>
    <property type="molecule type" value="Genomic_DNA"/>
</dbReference>
<dbReference type="EMBL" id="Z82987">
    <property type="protein sequence ID" value="CAB05381.1"/>
    <property type="molecule type" value="Genomic_DNA"/>
</dbReference>
<dbReference type="PIR" id="I40531">
    <property type="entry name" value="I40531"/>
</dbReference>
<dbReference type="RefSeq" id="NP_391522.2">
    <property type="nucleotide sequence ID" value="NC_000964.3"/>
</dbReference>
<dbReference type="RefSeq" id="WP_003227776.1">
    <property type="nucleotide sequence ID" value="NZ_OZ025638.1"/>
</dbReference>
<dbReference type="SMR" id="P39751"/>
<dbReference type="DIP" id="DIP-52430N"/>
<dbReference type="FunCoup" id="P39751">
    <property type="interactions" value="19"/>
</dbReference>
<dbReference type="IntAct" id="P39751">
    <property type="interactions" value="2"/>
</dbReference>
<dbReference type="STRING" id="224308.BSU36410"/>
<dbReference type="jPOST" id="P39751"/>
<dbReference type="PaxDb" id="224308-BSU36410"/>
<dbReference type="EnsemblBacteria" id="CAB15658">
    <property type="protein sequence ID" value="CAB15658"/>
    <property type="gene ID" value="BSU_36410"/>
</dbReference>
<dbReference type="GeneID" id="76980139"/>
<dbReference type="GeneID" id="936916"/>
<dbReference type="KEGG" id="bsu:BSU36410"/>
<dbReference type="PATRIC" id="fig|224308.179.peg.3941"/>
<dbReference type="eggNOG" id="COG1077">
    <property type="taxonomic scope" value="Bacteria"/>
</dbReference>
<dbReference type="InParanoid" id="P39751"/>
<dbReference type="OrthoDB" id="9768127at2"/>
<dbReference type="PhylomeDB" id="P39751"/>
<dbReference type="BioCyc" id="BSUB:BSU36410-MONOMER"/>
<dbReference type="Proteomes" id="UP000001570">
    <property type="component" value="Chromosome"/>
</dbReference>
<dbReference type="GO" id="GO:0005737">
    <property type="term" value="C:cytoplasm"/>
    <property type="evidence" value="ECO:0007669"/>
    <property type="project" value="UniProtKB-SubCell"/>
</dbReference>
<dbReference type="GO" id="GO:0005524">
    <property type="term" value="F:ATP binding"/>
    <property type="evidence" value="ECO:0007669"/>
    <property type="project" value="UniProtKB-KW"/>
</dbReference>
<dbReference type="GO" id="GO:0000902">
    <property type="term" value="P:cell morphogenesis"/>
    <property type="evidence" value="ECO:0007669"/>
    <property type="project" value="InterPro"/>
</dbReference>
<dbReference type="GO" id="GO:0008360">
    <property type="term" value="P:regulation of cell shape"/>
    <property type="evidence" value="ECO:0007669"/>
    <property type="project" value="UniProtKB-UniRule"/>
</dbReference>
<dbReference type="CDD" id="cd10225">
    <property type="entry name" value="ASKHA_NBD_MreB-like"/>
    <property type="match status" value="1"/>
</dbReference>
<dbReference type="Gene3D" id="3.30.420.40">
    <property type="match status" value="3"/>
</dbReference>
<dbReference type="HAMAP" id="MF_02207">
    <property type="entry name" value="MreB"/>
    <property type="match status" value="1"/>
</dbReference>
<dbReference type="InterPro" id="IPR043129">
    <property type="entry name" value="ATPase_NBD"/>
</dbReference>
<dbReference type="InterPro" id="IPR004753">
    <property type="entry name" value="MreB"/>
</dbReference>
<dbReference type="InterPro" id="IPR056546">
    <property type="entry name" value="MreB_MamK-like"/>
</dbReference>
<dbReference type="NCBIfam" id="TIGR00904">
    <property type="entry name" value="mreB"/>
    <property type="match status" value="1"/>
</dbReference>
<dbReference type="NCBIfam" id="NF010539">
    <property type="entry name" value="PRK13927.1"/>
    <property type="match status" value="1"/>
</dbReference>
<dbReference type="PANTHER" id="PTHR42749:SF4">
    <property type="entry name" value="CELL SHAPE-DETERMINING PROTEIN MBL"/>
    <property type="match status" value="1"/>
</dbReference>
<dbReference type="PANTHER" id="PTHR42749">
    <property type="entry name" value="CELL SHAPE-DETERMINING PROTEIN MREB"/>
    <property type="match status" value="1"/>
</dbReference>
<dbReference type="Pfam" id="PF06723">
    <property type="entry name" value="MreB_Mbl"/>
    <property type="match status" value="1"/>
</dbReference>
<dbReference type="PRINTS" id="PR01652">
    <property type="entry name" value="SHAPEPROTEIN"/>
</dbReference>
<dbReference type="SUPFAM" id="SSF53067">
    <property type="entry name" value="Actin-like ATPase domain"/>
    <property type="match status" value="2"/>
</dbReference>
<sequence length="333" mass="35861">MFARDIGIDLGTANVLIHVKGKGIVLNEPSVVALDKNSGKVLAVGEEARRMVGRTPGNIVAIRPLKDGVIADFEVTEAMLKHFINKLNVKGLFSKPRMLICCPTNITSVEQKAIKEAAEKSGGKHVYLEEEPKVAAIGAGMEIFQPSGNMVVDIGGGTTDIAVISMGDIVTSSSIKMAGDKFDMEILNYIKREYKLLIGERTAEDIKIKVATVFPDARHEEISIRGRDMVSGLPRTITVNSKEVEEALRESVAVIVQAAKQVLERTPPELSADIIDRGVIITGGGALLNGLDQLLAEELKVPVLVAENPMDCVAIGTGVMLDNMDKLPKRKLS</sequence>
<organism>
    <name type="scientific">Bacillus subtilis (strain 168)</name>
    <dbReference type="NCBI Taxonomy" id="224308"/>
    <lineage>
        <taxon>Bacteria</taxon>
        <taxon>Bacillati</taxon>
        <taxon>Bacillota</taxon>
        <taxon>Bacilli</taxon>
        <taxon>Bacillales</taxon>
        <taxon>Bacillaceae</taxon>
        <taxon>Bacillus</taxon>
    </lineage>
</organism>
<comment type="function">
    <text evidence="1 3 4 7 8 9">Forms membrane-associated dynamic filaments that are essential for cell shape determination (PubMed:11290328, PubMed:19659933). Acts by regulating cell wall synthesis and cell elongation, and thus cell shape (PubMed:19659933). A feedback loop between cell geometry and Mbl localization may maintain elongated cell shape by targeting cell wall growth to regions of negative cell wall curvature (By similarity). Filaments rotate around the cell circumference in concert with the cell wall synthesis enzymes. The process is driven by the cell wall synthesis machinery and does not depend on Mbl polymerization (PubMed:21636744, PubMed:21636745). Organizes peptidoglycan synthesis in the lateral cell wall (PubMed:19659933). Also required for proper chromosome segregation (PubMed:14588250).</text>
</comment>
<comment type="subunit">
    <text evidence="3 6 7">Forms polymers (PubMed:11290328, PubMed:19659933). Forms a complex with MreB and MreBH (PubMed:17064365, PubMed:19659933). Interacts with MreC (PubMed:17064365).</text>
</comment>
<comment type="interaction">
    <interactant intactId="EBI-2122805">
        <id>P39751</id>
    </interactant>
    <interactant intactId="EBI-2122675">
        <id>P33166</id>
        <label>tuf</label>
    </interactant>
    <organismsDiffer>false</organismsDiffer>
    <experiments>3</experiments>
</comment>
<comment type="subcellular location">
    <subcellularLocation>
        <location evidence="6 11">Cytoplasm</location>
    </subcellularLocation>
    <text evidence="3 5 6">Membrane-associated (PubMed:17064365). Localizes in the form of helical filaments that run the length of the cell (PubMed:11290328). Colocalizes with MreB, MreBH and MreC (PubMed:16950129, PubMed:17064365).</text>
</comment>
<comment type="disruption phenotype">
    <text evidence="3 4">Mutants are bent and twisted at irregular angles (PubMed:11290328). Depletion leads to a strong defect in chromosome segregation (PubMed:14588250).</text>
</comment>
<comment type="miscellaneous">
    <text evidence="7">B.subtilis has three MreB paralogs: MreB, Mbl and MreBH. All paralogs have the ability to support rod-shaped cell growth normal conditions. The multiplicity of paralogs becomes important under stress conditions. They are probably used to allow cells to maintain proper growth and morphogenesis under changing conditions.</text>
</comment>
<comment type="similarity">
    <text evidence="2 10">Belongs to the FtsA/MreB family.</text>
</comment>
<evidence type="ECO:0000250" key="1">
    <source>
        <dbReference type="UniProtKB" id="P0A9X4"/>
    </source>
</evidence>
<evidence type="ECO:0000255" key="2">
    <source>
        <dbReference type="HAMAP-Rule" id="MF_02207"/>
    </source>
</evidence>
<evidence type="ECO:0000269" key="3">
    <source>
    </source>
</evidence>
<evidence type="ECO:0000269" key="4">
    <source>
    </source>
</evidence>
<evidence type="ECO:0000269" key="5">
    <source>
    </source>
</evidence>
<evidence type="ECO:0000269" key="6">
    <source>
    </source>
</evidence>
<evidence type="ECO:0000269" key="7">
    <source>
    </source>
</evidence>
<evidence type="ECO:0000269" key="8">
    <source>
    </source>
</evidence>
<evidence type="ECO:0000269" key="9">
    <source>
    </source>
</evidence>
<evidence type="ECO:0000305" key="10"/>
<evidence type="ECO:0000305" key="11">
    <source>
    </source>
</evidence>
<protein>
    <recommendedName>
        <fullName evidence="10">Cell shape-determining protein Mbl</fullName>
    </recommendedName>
    <alternativeName>
        <fullName evidence="10">Actin-like Mbl protein</fullName>
    </alternativeName>
    <alternativeName>
        <fullName evidence="10">Rod shape-determining protein Mbl</fullName>
    </alternativeName>
</protein>